<evidence type="ECO:0000255" key="1">
    <source>
        <dbReference type="HAMAP-Rule" id="MF_01367"/>
    </source>
</evidence>
<evidence type="ECO:0000305" key="2"/>
<reference key="1">
    <citation type="submission" date="2007-03" db="EMBL/GenBank/DDBJ databases">
        <title>Complete sequence of Shewanella loihica PV-4.</title>
        <authorList>
            <consortium name="US DOE Joint Genome Institute"/>
            <person name="Copeland A."/>
            <person name="Lucas S."/>
            <person name="Lapidus A."/>
            <person name="Barry K."/>
            <person name="Detter J.C."/>
            <person name="Glavina del Rio T."/>
            <person name="Hammon N."/>
            <person name="Israni S."/>
            <person name="Dalin E."/>
            <person name="Tice H."/>
            <person name="Pitluck S."/>
            <person name="Chain P."/>
            <person name="Malfatti S."/>
            <person name="Shin M."/>
            <person name="Vergez L."/>
            <person name="Schmutz J."/>
            <person name="Larimer F."/>
            <person name="Land M."/>
            <person name="Hauser L."/>
            <person name="Kyrpides N."/>
            <person name="Mikhailova N."/>
            <person name="Romine M.F."/>
            <person name="Serres G."/>
            <person name="Fredrickson J."/>
            <person name="Tiedje J."/>
            <person name="Richardson P."/>
        </authorList>
    </citation>
    <scope>NUCLEOTIDE SEQUENCE [LARGE SCALE GENOMIC DNA]</scope>
    <source>
        <strain>ATCC BAA-1088 / PV-4</strain>
    </source>
</reference>
<accession>A3Q992</accession>
<proteinExistence type="inferred from homology"/>
<protein>
    <recommendedName>
        <fullName evidence="1">Large ribosomal subunit protein uL14</fullName>
    </recommendedName>
    <alternativeName>
        <fullName evidence="2">50S ribosomal protein L14</fullName>
    </alternativeName>
</protein>
<feature type="chain" id="PRO_1000055698" description="Large ribosomal subunit protein uL14">
    <location>
        <begin position="1"/>
        <end position="122"/>
    </location>
</feature>
<comment type="function">
    <text evidence="1">Binds to 23S rRNA. Forms part of two intersubunit bridges in the 70S ribosome.</text>
</comment>
<comment type="subunit">
    <text evidence="1">Part of the 50S ribosomal subunit. Forms a cluster with proteins L3 and L19. In the 70S ribosome, L14 and L19 interact and together make contacts with the 16S rRNA in bridges B5 and B8.</text>
</comment>
<comment type="similarity">
    <text evidence="1">Belongs to the universal ribosomal protein uL14 family.</text>
</comment>
<sequence length="122" mass="13329">MIQMQSTLEVACNSGARRVQCIKVLGGSHRRYAGIGDVIKVSVKEAIPRGKAKKGDVYNAVVVRTKKGVRRPDGSVIRFDRNAAVLLNANLAPIGTRIFGPVTRELRTEQFMKIVSLAPEVL</sequence>
<organism>
    <name type="scientific">Shewanella loihica (strain ATCC BAA-1088 / PV-4)</name>
    <dbReference type="NCBI Taxonomy" id="323850"/>
    <lineage>
        <taxon>Bacteria</taxon>
        <taxon>Pseudomonadati</taxon>
        <taxon>Pseudomonadota</taxon>
        <taxon>Gammaproteobacteria</taxon>
        <taxon>Alteromonadales</taxon>
        <taxon>Shewanellaceae</taxon>
        <taxon>Shewanella</taxon>
    </lineage>
</organism>
<name>RL14_SHELP</name>
<dbReference type="EMBL" id="CP000606">
    <property type="protein sequence ID" value="ABO22040.1"/>
    <property type="molecule type" value="Genomic_DNA"/>
</dbReference>
<dbReference type="RefSeq" id="WP_011863976.1">
    <property type="nucleotide sequence ID" value="NC_009092.1"/>
</dbReference>
<dbReference type="SMR" id="A3Q992"/>
<dbReference type="STRING" id="323850.Shew_0168"/>
<dbReference type="KEGG" id="slo:Shew_0168"/>
<dbReference type="eggNOG" id="COG0093">
    <property type="taxonomic scope" value="Bacteria"/>
</dbReference>
<dbReference type="HOGENOM" id="CLU_095071_2_1_6"/>
<dbReference type="OrthoDB" id="9806379at2"/>
<dbReference type="Proteomes" id="UP000001558">
    <property type="component" value="Chromosome"/>
</dbReference>
<dbReference type="GO" id="GO:0022625">
    <property type="term" value="C:cytosolic large ribosomal subunit"/>
    <property type="evidence" value="ECO:0007669"/>
    <property type="project" value="TreeGrafter"/>
</dbReference>
<dbReference type="GO" id="GO:0070180">
    <property type="term" value="F:large ribosomal subunit rRNA binding"/>
    <property type="evidence" value="ECO:0007669"/>
    <property type="project" value="TreeGrafter"/>
</dbReference>
<dbReference type="GO" id="GO:0003735">
    <property type="term" value="F:structural constituent of ribosome"/>
    <property type="evidence" value="ECO:0007669"/>
    <property type="project" value="InterPro"/>
</dbReference>
<dbReference type="GO" id="GO:0006412">
    <property type="term" value="P:translation"/>
    <property type="evidence" value="ECO:0007669"/>
    <property type="project" value="UniProtKB-UniRule"/>
</dbReference>
<dbReference type="CDD" id="cd00337">
    <property type="entry name" value="Ribosomal_uL14"/>
    <property type="match status" value="1"/>
</dbReference>
<dbReference type="FunFam" id="2.40.150.20:FF:000001">
    <property type="entry name" value="50S ribosomal protein L14"/>
    <property type="match status" value="1"/>
</dbReference>
<dbReference type="Gene3D" id="2.40.150.20">
    <property type="entry name" value="Ribosomal protein L14"/>
    <property type="match status" value="1"/>
</dbReference>
<dbReference type="HAMAP" id="MF_01367">
    <property type="entry name" value="Ribosomal_uL14"/>
    <property type="match status" value="1"/>
</dbReference>
<dbReference type="InterPro" id="IPR000218">
    <property type="entry name" value="Ribosomal_uL14"/>
</dbReference>
<dbReference type="InterPro" id="IPR005745">
    <property type="entry name" value="Ribosomal_uL14_bac-type"/>
</dbReference>
<dbReference type="InterPro" id="IPR019972">
    <property type="entry name" value="Ribosomal_uL14_CS"/>
</dbReference>
<dbReference type="InterPro" id="IPR036853">
    <property type="entry name" value="Ribosomal_uL14_sf"/>
</dbReference>
<dbReference type="NCBIfam" id="TIGR01067">
    <property type="entry name" value="rplN_bact"/>
    <property type="match status" value="1"/>
</dbReference>
<dbReference type="PANTHER" id="PTHR11761">
    <property type="entry name" value="50S/60S RIBOSOMAL PROTEIN L14/L23"/>
    <property type="match status" value="1"/>
</dbReference>
<dbReference type="PANTHER" id="PTHR11761:SF3">
    <property type="entry name" value="LARGE RIBOSOMAL SUBUNIT PROTEIN UL14M"/>
    <property type="match status" value="1"/>
</dbReference>
<dbReference type="Pfam" id="PF00238">
    <property type="entry name" value="Ribosomal_L14"/>
    <property type="match status" value="1"/>
</dbReference>
<dbReference type="SMART" id="SM01374">
    <property type="entry name" value="Ribosomal_L14"/>
    <property type="match status" value="1"/>
</dbReference>
<dbReference type="SUPFAM" id="SSF50193">
    <property type="entry name" value="Ribosomal protein L14"/>
    <property type="match status" value="1"/>
</dbReference>
<dbReference type="PROSITE" id="PS00049">
    <property type="entry name" value="RIBOSOMAL_L14"/>
    <property type="match status" value="1"/>
</dbReference>
<gene>
    <name evidence="1" type="primary">rplN</name>
    <name type="ordered locus">Shew_0168</name>
</gene>
<keyword id="KW-1185">Reference proteome</keyword>
<keyword id="KW-0687">Ribonucleoprotein</keyword>
<keyword id="KW-0689">Ribosomal protein</keyword>
<keyword id="KW-0694">RNA-binding</keyword>
<keyword id="KW-0699">rRNA-binding</keyword>